<protein>
    <recommendedName>
        <fullName>Uncharacterized deaminase C1683.02</fullName>
        <ecNumber>3.5.4.-</ecNumber>
    </recommendedName>
</protein>
<feature type="chain" id="PRO_0000316220" description="Uncharacterized deaminase C1683.02">
    <location>
        <begin position="1"/>
        <end position="339"/>
    </location>
</feature>
<feature type="binding site" evidence="2">
    <location>
        <position position="17"/>
    </location>
    <ligand>
        <name>Zn(2+)</name>
        <dbReference type="ChEBI" id="CHEBI:29105"/>
        <note>catalytic</note>
    </ligand>
</feature>
<feature type="binding site" evidence="2">
    <location>
        <position position="19"/>
    </location>
    <ligand>
        <name>Zn(2+)</name>
        <dbReference type="ChEBI" id="CHEBI:29105"/>
        <note>catalytic</note>
    </ligand>
</feature>
<feature type="binding site" evidence="1">
    <location>
        <position position="197"/>
    </location>
    <ligand>
        <name>Zn(2+)</name>
        <dbReference type="ChEBI" id="CHEBI:29105"/>
        <note>catalytic</note>
    </ligand>
</feature>
<feature type="binding site" evidence="1">
    <location>
        <position position="278"/>
    </location>
    <ligand>
        <name>Zn(2+)</name>
        <dbReference type="ChEBI" id="CHEBI:29105"/>
        <note>catalytic</note>
    </ligand>
</feature>
<feature type="binding site" evidence="1">
    <location>
        <position position="279"/>
    </location>
    <ligand>
        <name>substrate</name>
    </ligand>
</feature>
<feature type="site" description="Important for catalytic activity" evidence="1">
    <location>
        <position position="223"/>
    </location>
</feature>
<accession>Q9P6J8</accession>
<gene>
    <name type="ORF">SPBC1683.02</name>
</gene>
<evidence type="ECO:0000250" key="1"/>
<evidence type="ECO:0000255" key="2"/>
<evidence type="ECO:0000269" key="3">
    <source>
    </source>
</evidence>
<evidence type="ECO:0000305" key="4"/>
<reference key="1">
    <citation type="journal article" date="2002" name="Nature">
        <title>The genome sequence of Schizosaccharomyces pombe.</title>
        <authorList>
            <person name="Wood V."/>
            <person name="Gwilliam R."/>
            <person name="Rajandream M.A."/>
            <person name="Lyne M.H."/>
            <person name="Lyne R."/>
            <person name="Stewart A."/>
            <person name="Sgouros J.G."/>
            <person name="Peat N."/>
            <person name="Hayles J."/>
            <person name="Baker S.G."/>
            <person name="Basham D."/>
            <person name="Bowman S."/>
            <person name="Brooks K."/>
            <person name="Brown D."/>
            <person name="Brown S."/>
            <person name="Chillingworth T."/>
            <person name="Churcher C.M."/>
            <person name="Collins M."/>
            <person name="Connor R."/>
            <person name="Cronin A."/>
            <person name="Davis P."/>
            <person name="Feltwell T."/>
            <person name="Fraser A."/>
            <person name="Gentles S."/>
            <person name="Goble A."/>
            <person name="Hamlin N."/>
            <person name="Harris D.E."/>
            <person name="Hidalgo J."/>
            <person name="Hodgson G."/>
            <person name="Holroyd S."/>
            <person name="Hornsby T."/>
            <person name="Howarth S."/>
            <person name="Huckle E.J."/>
            <person name="Hunt S."/>
            <person name="Jagels K."/>
            <person name="James K.D."/>
            <person name="Jones L."/>
            <person name="Jones M."/>
            <person name="Leather S."/>
            <person name="McDonald S."/>
            <person name="McLean J."/>
            <person name="Mooney P."/>
            <person name="Moule S."/>
            <person name="Mungall K.L."/>
            <person name="Murphy L.D."/>
            <person name="Niblett D."/>
            <person name="Odell C."/>
            <person name="Oliver K."/>
            <person name="O'Neil S."/>
            <person name="Pearson D."/>
            <person name="Quail M.A."/>
            <person name="Rabbinowitsch E."/>
            <person name="Rutherford K.M."/>
            <person name="Rutter S."/>
            <person name="Saunders D."/>
            <person name="Seeger K."/>
            <person name="Sharp S."/>
            <person name="Skelton J."/>
            <person name="Simmonds M.N."/>
            <person name="Squares R."/>
            <person name="Squares S."/>
            <person name="Stevens K."/>
            <person name="Taylor K."/>
            <person name="Taylor R.G."/>
            <person name="Tivey A."/>
            <person name="Walsh S.V."/>
            <person name="Warren T."/>
            <person name="Whitehead S."/>
            <person name="Woodward J.R."/>
            <person name="Volckaert G."/>
            <person name="Aert R."/>
            <person name="Robben J."/>
            <person name="Grymonprez B."/>
            <person name="Weltjens I."/>
            <person name="Vanstreels E."/>
            <person name="Rieger M."/>
            <person name="Schaefer M."/>
            <person name="Mueller-Auer S."/>
            <person name="Gabel C."/>
            <person name="Fuchs M."/>
            <person name="Duesterhoeft A."/>
            <person name="Fritzc C."/>
            <person name="Holzer E."/>
            <person name="Moestl D."/>
            <person name="Hilbert H."/>
            <person name="Borzym K."/>
            <person name="Langer I."/>
            <person name="Beck A."/>
            <person name="Lehrach H."/>
            <person name="Reinhardt R."/>
            <person name="Pohl T.M."/>
            <person name="Eger P."/>
            <person name="Zimmermann W."/>
            <person name="Wedler H."/>
            <person name="Wambutt R."/>
            <person name="Purnelle B."/>
            <person name="Goffeau A."/>
            <person name="Cadieu E."/>
            <person name="Dreano S."/>
            <person name="Gloux S."/>
            <person name="Lelaure V."/>
            <person name="Mottier S."/>
            <person name="Galibert F."/>
            <person name="Aves S.J."/>
            <person name="Xiang Z."/>
            <person name="Hunt C."/>
            <person name="Moore K."/>
            <person name="Hurst S.M."/>
            <person name="Lucas M."/>
            <person name="Rochet M."/>
            <person name="Gaillardin C."/>
            <person name="Tallada V.A."/>
            <person name="Garzon A."/>
            <person name="Thode G."/>
            <person name="Daga R.R."/>
            <person name="Cruzado L."/>
            <person name="Jimenez J."/>
            <person name="Sanchez M."/>
            <person name="del Rey F."/>
            <person name="Benito J."/>
            <person name="Dominguez A."/>
            <person name="Revuelta J.L."/>
            <person name="Moreno S."/>
            <person name="Armstrong J."/>
            <person name="Forsburg S.L."/>
            <person name="Cerutti L."/>
            <person name="Lowe T."/>
            <person name="McCombie W.R."/>
            <person name="Paulsen I."/>
            <person name="Potashkin J."/>
            <person name="Shpakovski G.V."/>
            <person name="Ussery D."/>
            <person name="Barrell B.G."/>
            <person name="Nurse P."/>
        </authorList>
    </citation>
    <scope>NUCLEOTIDE SEQUENCE [LARGE SCALE GENOMIC DNA]</scope>
    <source>
        <strain>972 / ATCC 24843</strain>
    </source>
</reference>
<reference key="2">
    <citation type="journal article" date="2006" name="Nat. Biotechnol.">
        <title>ORFeome cloning and global analysis of protein localization in the fission yeast Schizosaccharomyces pombe.</title>
        <authorList>
            <person name="Matsuyama A."/>
            <person name="Arai R."/>
            <person name="Yashiroda Y."/>
            <person name="Shirai A."/>
            <person name="Kamata A."/>
            <person name="Sekido S."/>
            <person name="Kobayashi Y."/>
            <person name="Hashimoto A."/>
            <person name="Hamamoto M."/>
            <person name="Hiraoka Y."/>
            <person name="Horinouchi S."/>
            <person name="Yoshida M."/>
        </authorList>
    </citation>
    <scope>SUBCELLULAR LOCATION [LARGE SCALE ANALYSIS]</scope>
</reference>
<sequence>MTDIERFIEKLPKAELHLHLEGTLEAELKLKLSHRNKIPLKQSSIEEIKESYNFHDLASFLEVYYEGVELLLHEQDFYDLCYQYLRKAASQNVVYAEMFFDPQLHTRRGISFETVIKGLIRARDDAMRDFHIYSQLIMCFIREMSFENAEETLNASLPYKSEIIGIGLDSNEENNPPIKFLKVFQRARQLGYRLTCHCDLHQKNTTTHIRQALEDIGVERIDHGINILDDPELIKLALERNIPFTVCPFSNEIVYPGKAQPEIRIMLDTGLKVTINSDDPAYMHCFYITENFNLAQKGASLTKKELVQICRNSFEAAWISEEKRNHYLEALNSFASAYD</sequence>
<comment type="cofactor">
    <cofactor evidence="4">
        <name>Zn(2+)</name>
        <dbReference type="ChEBI" id="CHEBI:29105"/>
    </cofactor>
    <text evidence="4">Binds 1 zinc ion per subunit.</text>
</comment>
<comment type="subcellular location">
    <subcellularLocation>
        <location evidence="3">Cytoplasm</location>
    </subcellularLocation>
    <subcellularLocation>
        <location evidence="3">Nucleus</location>
    </subcellularLocation>
</comment>
<comment type="similarity">
    <text evidence="4">Belongs to the metallo-dependent hydrolases superfamily. Adenosine and AMP deaminases family. Adenine deaminase type 2 subfamily.</text>
</comment>
<comment type="caution">
    <text evidence="4">Although clearly a member of the adenine deaminase type 2 family, it lacks the conserved Glu active site residue in position 212 characteristic for this family. Its exact enzymatic activity is therefore unsure.</text>
</comment>
<proteinExistence type="inferred from homology"/>
<name>YHD2_SCHPO</name>
<keyword id="KW-0963">Cytoplasm</keyword>
<keyword id="KW-0378">Hydrolase</keyword>
<keyword id="KW-0479">Metal-binding</keyword>
<keyword id="KW-0539">Nucleus</keyword>
<keyword id="KW-1185">Reference proteome</keyword>
<keyword id="KW-0862">Zinc</keyword>
<dbReference type="EC" id="3.5.4.-"/>
<dbReference type="EMBL" id="CU329671">
    <property type="protein sequence ID" value="CAB91164.1"/>
    <property type="molecule type" value="Genomic_DNA"/>
</dbReference>
<dbReference type="RefSeq" id="NP_595058.1">
    <property type="nucleotide sequence ID" value="NM_001020964.2"/>
</dbReference>
<dbReference type="SMR" id="Q9P6J8"/>
<dbReference type="BioGRID" id="276700">
    <property type="interactions" value="4"/>
</dbReference>
<dbReference type="FunCoup" id="Q9P6J8">
    <property type="interactions" value="135"/>
</dbReference>
<dbReference type="STRING" id="284812.Q9P6J8"/>
<dbReference type="PaxDb" id="4896-SPBC1683.02.1"/>
<dbReference type="EnsemblFungi" id="SPBC1683.02.1">
    <property type="protein sequence ID" value="SPBC1683.02.1:pep"/>
    <property type="gene ID" value="SPBC1683.02"/>
</dbReference>
<dbReference type="PomBase" id="SPBC1683.02"/>
<dbReference type="VEuPathDB" id="FungiDB:SPBC1683.02"/>
<dbReference type="eggNOG" id="KOG1097">
    <property type="taxonomic scope" value="Eukaryota"/>
</dbReference>
<dbReference type="HOGENOM" id="CLU_039228_7_0_1"/>
<dbReference type="InParanoid" id="Q9P6J8"/>
<dbReference type="OMA" id="RITAHCD"/>
<dbReference type="PhylomeDB" id="Q9P6J8"/>
<dbReference type="PRO" id="PR:Q9P6J8"/>
<dbReference type="Proteomes" id="UP000002485">
    <property type="component" value="Chromosome II"/>
</dbReference>
<dbReference type="GO" id="GO:0005829">
    <property type="term" value="C:cytosol"/>
    <property type="evidence" value="ECO:0007005"/>
    <property type="project" value="PomBase"/>
</dbReference>
<dbReference type="GO" id="GO:0005634">
    <property type="term" value="C:nucleus"/>
    <property type="evidence" value="ECO:0007005"/>
    <property type="project" value="PomBase"/>
</dbReference>
<dbReference type="GO" id="GO:0000034">
    <property type="term" value="F:adenine deaminase activity"/>
    <property type="evidence" value="ECO:0000318"/>
    <property type="project" value="GO_Central"/>
</dbReference>
<dbReference type="GO" id="GO:0008270">
    <property type="term" value="F:zinc ion binding"/>
    <property type="evidence" value="ECO:0007669"/>
    <property type="project" value="UniProtKB-UniRule"/>
</dbReference>
<dbReference type="GO" id="GO:0006146">
    <property type="term" value="P:adenine catabolic process"/>
    <property type="evidence" value="ECO:0000318"/>
    <property type="project" value="GO_Central"/>
</dbReference>
<dbReference type="GO" id="GO:0043103">
    <property type="term" value="P:hypoxanthine salvage"/>
    <property type="evidence" value="ECO:0000318"/>
    <property type="project" value="GO_Central"/>
</dbReference>
<dbReference type="GO" id="GO:0032264">
    <property type="term" value="P:IMP salvage"/>
    <property type="evidence" value="ECO:0000305"/>
    <property type="project" value="PomBase"/>
</dbReference>
<dbReference type="CDD" id="cd01320">
    <property type="entry name" value="ADA"/>
    <property type="match status" value="1"/>
</dbReference>
<dbReference type="FunFam" id="3.20.20.140:FF:000039">
    <property type="entry name" value="Adenine deaminase"/>
    <property type="match status" value="1"/>
</dbReference>
<dbReference type="Gene3D" id="3.20.20.140">
    <property type="entry name" value="Metal-dependent hydrolases"/>
    <property type="match status" value="1"/>
</dbReference>
<dbReference type="HAMAP" id="MF_01962">
    <property type="entry name" value="Adenine_deaminase"/>
    <property type="match status" value="1"/>
</dbReference>
<dbReference type="InterPro" id="IPR001365">
    <property type="entry name" value="A_deaminase_dom"/>
</dbReference>
<dbReference type="InterPro" id="IPR028892">
    <property type="entry name" value="ADE"/>
</dbReference>
<dbReference type="InterPro" id="IPR006330">
    <property type="entry name" value="Ado/ade_deaminase"/>
</dbReference>
<dbReference type="InterPro" id="IPR032466">
    <property type="entry name" value="Metal_Hydrolase"/>
</dbReference>
<dbReference type="NCBIfam" id="TIGR01430">
    <property type="entry name" value="aden_deam"/>
    <property type="match status" value="1"/>
</dbReference>
<dbReference type="PANTHER" id="PTHR43114">
    <property type="entry name" value="ADENINE DEAMINASE"/>
    <property type="match status" value="1"/>
</dbReference>
<dbReference type="PANTHER" id="PTHR43114:SF7">
    <property type="entry name" value="ADENOSINE DEAMINASE DOMAIN-CONTAINING PROTEIN"/>
    <property type="match status" value="1"/>
</dbReference>
<dbReference type="Pfam" id="PF00962">
    <property type="entry name" value="A_deaminase"/>
    <property type="match status" value="1"/>
</dbReference>
<dbReference type="SUPFAM" id="SSF51556">
    <property type="entry name" value="Metallo-dependent hydrolases"/>
    <property type="match status" value="1"/>
</dbReference>
<organism>
    <name type="scientific">Schizosaccharomyces pombe (strain 972 / ATCC 24843)</name>
    <name type="common">Fission yeast</name>
    <dbReference type="NCBI Taxonomy" id="284812"/>
    <lineage>
        <taxon>Eukaryota</taxon>
        <taxon>Fungi</taxon>
        <taxon>Dikarya</taxon>
        <taxon>Ascomycota</taxon>
        <taxon>Taphrinomycotina</taxon>
        <taxon>Schizosaccharomycetes</taxon>
        <taxon>Schizosaccharomycetales</taxon>
        <taxon>Schizosaccharomycetaceae</taxon>
        <taxon>Schizosaccharomyces</taxon>
    </lineage>
</organism>